<evidence type="ECO:0000250" key="1">
    <source>
        <dbReference type="UniProtKB" id="Q5U4E2"/>
    </source>
</evidence>
<evidence type="ECO:0000255" key="2">
    <source>
        <dbReference type="PROSITE-ProRule" id="PRU00042"/>
    </source>
</evidence>
<evidence type="ECO:0000256" key="3">
    <source>
        <dbReference type="SAM" id="MobiDB-lite"/>
    </source>
</evidence>
<evidence type="ECO:0000269" key="4">
    <source>
    </source>
</evidence>
<evidence type="ECO:0000269" key="5">
    <source>
    </source>
</evidence>
<evidence type="ECO:0000269" key="6">
    <source>
    </source>
</evidence>
<evidence type="ECO:0000269" key="7">
    <source>
    </source>
</evidence>
<evidence type="ECO:0000269" key="8">
    <source>
    </source>
</evidence>
<evidence type="ECO:0000269" key="9">
    <source>
    </source>
</evidence>
<evidence type="ECO:0000269" key="10">
    <source>
    </source>
</evidence>
<evidence type="ECO:0000269" key="11">
    <source>
    </source>
</evidence>
<evidence type="ECO:0000269" key="12">
    <source>
    </source>
</evidence>
<evidence type="ECO:0000269" key="13">
    <source ref="2"/>
</evidence>
<evidence type="ECO:0000305" key="14"/>
<evidence type="ECO:0007744" key="15">
    <source>
    </source>
</evidence>
<evidence type="ECO:0007744" key="16">
    <source>
    </source>
</evidence>
<evidence type="ECO:0007744" key="17">
    <source>
    </source>
</evidence>
<organism>
    <name type="scientific">Homo sapiens</name>
    <name type="common">Human</name>
    <dbReference type="NCBI Taxonomy" id="9606"/>
    <lineage>
        <taxon>Eukaryota</taxon>
        <taxon>Metazoa</taxon>
        <taxon>Chordata</taxon>
        <taxon>Craniata</taxon>
        <taxon>Vertebrata</taxon>
        <taxon>Euteleostomi</taxon>
        <taxon>Mammalia</taxon>
        <taxon>Eutheria</taxon>
        <taxon>Euarchontoglires</taxon>
        <taxon>Primates</taxon>
        <taxon>Haplorrhini</taxon>
        <taxon>Catarrhini</taxon>
        <taxon>Hominidae</taxon>
        <taxon>Homo</taxon>
    </lineage>
</organism>
<proteinExistence type="evidence at protein level"/>
<feature type="chain" id="PRO_0000274912" description="DNA-binding protein REPIN1">
    <location>
        <begin position="1"/>
        <end position="567"/>
    </location>
</feature>
<feature type="zinc finger region" description="C2H2-type 1; atypical" evidence="2">
    <location>
        <begin position="57"/>
        <end position="79"/>
    </location>
</feature>
<feature type="zinc finger region" description="C2H2-type 2" evidence="2">
    <location>
        <begin position="85"/>
        <end position="107"/>
    </location>
</feature>
<feature type="zinc finger region" description="C2H2-type 3" evidence="2">
    <location>
        <begin position="116"/>
        <end position="138"/>
    </location>
</feature>
<feature type="zinc finger region" description="C2H2-type 4" evidence="2">
    <location>
        <begin position="145"/>
        <end position="168"/>
    </location>
</feature>
<feature type="zinc finger region" description="C2H2-type 5" evidence="2">
    <location>
        <begin position="177"/>
        <end position="199"/>
    </location>
</feature>
<feature type="zinc finger region" description="C2H2-type 6" evidence="2">
    <location>
        <begin position="236"/>
        <end position="258"/>
    </location>
</feature>
<feature type="zinc finger region" description="C2H2-type 7" evidence="2">
    <location>
        <begin position="264"/>
        <end position="286"/>
    </location>
</feature>
<feature type="zinc finger region" description="C2H2-type 8" evidence="2">
    <location>
        <begin position="292"/>
        <end position="314"/>
    </location>
</feature>
<feature type="zinc finger region" description="C2H2-type 9" evidence="2">
    <location>
        <begin position="375"/>
        <end position="397"/>
    </location>
</feature>
<feature type="zinc finger region" description="C2H2-type 10" evidence="2">
    <location>
        <begin position="403"/>
        <end position="425"/>
    </location>
</feature>
<feature type="zinc finger region" description="C2H2-type 11" evidence="2">
    <location>
        <begin position="431"/>
        <end position="453"/>
    </location>
</feature>
<feature type="zinc finger region" description="C2H2-type 12" evidence="2">
    <location>
        <begin position="459"/>
        <end position="481"/>
    </location>
</feature>
<feature type="zinc finger region" description="C2H2-type 13" evidence="2">
    <location>
        <begin position="487"/>
        <end position="509"/>
    </location>
</feature>
<feature type="zinc finger region" description="C2H2-type 14" evidence="2">
    <location>
        <begin position="515"/>
        <end position="537"/>
    </location>
</feature>
<feature type="zinc finger region" description="C2H2-type 15" evidence="2">
    <location>
        <begin position="543"/>
        <end position="565"/>
    </location>
</feature>
<feature type="region of interest" description="Disordered" evidence="3">
    <location>
        <begin position="17"/>
        <end position="52"/>
    </location>
</feature>
<feature type="region of interest" description="Disordered" evidence="3">
    <location>
        <begin position="305"/>
        <end position="372"/>
    </location>
</feature>
<feature type="compositionally biased region" description="Polar residues" evidence="3">
    <location>
        <begin position="22"/>
        <end position="50"/>
    </location>
</feature>
<feature type="compositionally biased region" description="Basic residues" evidence="3">
    <location>
        <begin position="305"/>
        <end position="315"/>
    </location>
</feature>
<feature type="compositionally biased region" description="Pro residues" evidence="3">
    <location>
        <begin position="345"/>
        <end position="362"/>
    </location>
</feature>
<feature type="modified residue" description="Phosphoserine" evidence="16 17">
    <location>
        <position position="27"/>
    </location>
</feature>
<feature type="modified residue" description="Phosphothreonine" evidence="17">
    <location>
        <position position="30"/>
    </location>
</feature>
<feature type="modified residue" description="N6-acetyllysine" evidence="15">
    <location>
        <position position="33"/>
    </location>
</feature>
<feature type="modified residue" description="N6-acetyllysine" evidence="15">
    <location>
        <position position="276"/>
    </location>
</feature>
<feature type="splice variant" id="VSP_054069" description="In isoform 2." evidence="14">
    <original>M</original>
    <variation>MGIGVSLLLQFSLTPGGYRSVGRSRRCSRGSIPRNIPKRSWKKPHPQLCSLQAEEEPM</variation>
    <location>
        <position position="1"/>
    </location>
</feature>
<feature type="sequence variant" id="VAR_030364" description="In dbSNP:rs3735165." evidence="13">
    <original>L</original>
    <variation>P</variation>
    <location>
        <position position="14"/>
    </location>
</feature>
<feature type="sequence variant" id="VAR_052730" description="In dbSNP:rs35090619.">
    <original>G</original>
    <variation>R</variation>
    <location>
        <position position="49"/>
    </location>
</feature>
<feature type="sequence variant" id="VAR_030365" description="In dbSNP:rs11553624." evidence="6">
    <original>P</original>
    <variation>S</variation>
    <location>
        <position position="88"/>
    </location>
</feature>
<feature type="sequence variant" id="VAR_030366" description="In dbSNP:rs17173702.">
    <original>R</original>
    <variation>H</variation>
    <location>
        <position position="92"/>
    </location>
</feature>
<feature type="sequence variant" id="VAR_030367" description="In dbSNP:rs17173703.">
    <original>A</original>
    <variation>V</variation>
    <location>
        <position position="97"/>
    </location>
</feature>
<feature type="sequence variant" id="VAR_089328" description="Increases cellular lipid content; increases cellular glycerol content; increases expression of fatty acid transport gene mRNA; increases expression of glucose transport gene mRNA; dbSNP:rs3832490." evidence="10">
    <location>
        <begin position="356"/>
        <end position="359"/>
    </location>
</feature>
<feature type="sequence conflict" description="In Ref. 1; AAF26712." evidence="14" ref="1">
    <original>R</original>
    <variation>L</variation>
    <location>
        <position position="136"/>
    </location>
</feature>
<feature type="sequence conflict" description="In Ref. 1; AAF26712." evidence="14" ref="1">
    <original>R</original>
    <variation>Q</variation>
    <location>
        <position position="143"/>
    </location>
</feature>
<feature type="sequence conflict" description="In Ref. 2; CAB53100." evidence="14" ref="2">
    <original>R</original>
    <variation>Q</variation>
    <location>
        <position position="165"/>
    </location>
</feature>
<feature type="sequence conflict" description="In Ref. 2; CAB53100." evidence="14" ref="2">
    <original>E</original>
    <variation>A</variation>
    <location>
        <position position="173"/>
    </location>
</feature>
<feature type="sequence conflict" description="In Ref. 2; CAB53100." evidence="14" ref="2">
    <original>A</original>
    <variation>V</variation>
    <location>
        <position position="211"/>
    </location>
</feature>
<feature type="sequence conflict" description="In Ref. 2; CAB53100." evidence="14" ref="2">
    <original>P</original>
    <variation>S</variation>
    <location>
        <position position="216"/>
    </location>
</feature>
<feature type="sequence conflict" description="In Ref. 1; AAF26712." evidence="14" ref="1">
    <original>QH</original>
    <variation>HD</variation>
    <location>
        <begin position="396"/>
        <end position="397"/>
    </location>
</feature>
<feature type="sequence conflict" description="In Ref. 1; AAF26712." evidence="14" ref="1">
    <original>R</original>
    <variation>P</variation>
    <location>
        <position position="423"/>
    </location>
</feature>
<feature type="sequence conflict" description="In Ref. 1; AAF26712." evidence="14" ref="1">
    <original>R</original>
    <variation>P</variation>
    <location>
        <position position="451"/>
    </location>
</feature>
<feature type="sequence conflict" description="In Ref. 1; AAF26712." evidence="14" ref="1">
    <original>A</original>
    <variation>R</variation>
    <location>
        <position position="476"/>
    </location>
</feature>
<feature type="sequence conflict" description="In Ref. 2; CAB53100." evidence="14" ref="2">
    <original>S</original>
    <variation>R</variation>
    <location>
        <position position="497"/>
    </location>
</feature>
<feature type="sequence conflict" description="In Ref. 2; CAB53100." evidence="14" ref="2">
    <original>P</original>
    <variation>S</variation>
    <location>
        <position position="514"/>
    </location>
</feature>
<name>REPI1_HUMAN</name>
<protein>
    <recommendedName>
        <fullName evidence="14">DNA-binding protein REPIN1</fullName>
    </recommendedName>
    <alternativeName>
        <fullName>60 kDa origin-specific DNA-binding protein</fullName>
    </alternativeName>
    <alternativeName>
        <fullName>60 kDa replication initiation region protein</fullName>
    </alternativeName>
    <alternativeName>
        <fullName>ATT-binding protein</fullName>
    </alternativeName>
    <alternativeName>
        <fullName>DHFR oribeta-binding protein RIP60</fullName>
    </alternativeName>
    <alternativeName>
        <fullName>Zinc finger protein 464</fullName>
    </alternativeName>
</protein>
<gene>
    <name type="primary">REPIN1</name>
    <name type="synonym">RIP60</name>
    <name type="synonym">ZNF464</name>
</gene>
<comment type="function">
    <text evidence="1 4 5 8 9 12">Sequence-specific double-stranded DNA-binding protein (PubMed:10606657, PubMed:11328883, PubMed:2174103, PubMed:2247056, PubMed:8355269). Binds ATT-rich and T-rich DNA sequences and facilitates DNA bending (PubMed:10606657, PubMed:11328883, PubMed:2174103, PubMed:2247056, PubMed:8355269). May regulate the expression of genes involved in cellular fatty acid import, including SCARB1/CD36, and genes involved in lipid droplet formation (By similarity). May regulate the expression of LCN2, and thereby influence iron metabolism and apoptosis-related pathways (By similarity). May regulate the expression of genes involved in glucose transport (By similarity).</text>
</comment>
<comment type="subunit">
    <text evidence="8 12">Homodimers and homomultimers (PubMed:8355269). Found in a complex with RIP60 and RIP100 (PubMed:2174103).</text>
</comment>
<comment type="interaction">
    <interactant intactId="EBI-24236508">
        <id>Q9BWE0-4</id>
    </interactant>
    <interactant intactId="EBI-7481343">
        <id>Q01105-2</id>
        <label>SET</label>
    </interactant>
    <organismsDiffer>false</organismsDiffer>
    <experiments>3</experiments>
</comment>
<comment type="subcellular location">
    <subcellularLocation>
        <location evidence="1">Nucleus</location>
    </subcellularLocation>
    <subcellularLocation>
        <location evidence="1">Cytoplasm</location>
        <location evidence="1">Cytosol</location>
    </subcellularLocation>
</comment>
<comment type="alternative products">
    <event type="alternative splicing"/>
    <isoform>
        <id>Q9BWE0-3</id>
        <name>1</name>
        <sequence type="displayed"/>
    </isoform>
    <isoform>
        <id>Q9BWE0-4</id>
        <name>2</name>
        <sequence type="described" ref="VSP_054069"/>
    </isoform>
</comment>
<comment type="tissue specificity">
    <text evidence="7 11">Expressed in adipose tissue and bone tissue.</text>
</comment>
<comment type="induction">
    <text evidence="11">Expression is increased in bone tissue of osteoporosis patients.</text>
</comment>
<comment type="caution">
    <text evidence="14">Was believed to function in chromosomal DNA replication initiation, later studies however do not corroborate this theory.</text>
</comment>
<comment type="sequence caution" evidence="14">
    <conflict type="erroneous initiation">
        <sequence resource="EMBL-CDS" id="AAH00363"/>
    </conflict>
    <text>Truncated N-terminus.</text>
</comment>
<comment type="sequence caution" evidence="14">
    <conflict type="erroneous gene model prediction">
        <sequence resource="EMBL-CDS" id="AAS00386"/>
    </conflict>
</comment>
<comment type="sequence caution" evidence="14">
    <conflict type="frameshift">
        <sequence resource="EMBL-CDS" id="CAB53100"/>
    </conflict>
</comment>
<accession>Q9BWE0</accession>
<accession>C9J3L7</accession>
<accession>D3DWZ1</accession>
<accession>Q7LE03</accession>
<accession>Q9BUZ6</accession>
<accession>Q9NZH2</accession>
<accession>Q9UMP5</accession>
<keyword id="KW-0007">Acetylation</keyword>
<keyword id="KW-0025">Alternative splicing</keyword>
<keyword id="KW-0963">Cytoplasm</keyword>
<keyword id="KW-0903">Direct protein sequencing</keyword>
<keyword id="KW-0238">DNA-binding</keyword>
<keyword id="KW-0479">Metal-binding</keyword>
<keyword id="KW-0539">Nucleus</keyword>
<keyword id="KW-0597">Phosphoprotein</keyword>
<keyword id="KW-1267">Proteomics identification</keyword>
<keyword id="KW-1185">Reference proteome</keyword>
<keyword id="KW-0677">Repeat</keyword>
<keyword id="KW-0862">Zinc</keyword>
<keyword id="KW-0863">Zinc-finger</keyword>
<sequence length="567" mass="63575">MLERRCRGPLAMGLAQPRLLSGPSQESPQTLGKESRGLRQQGTSVAQSGAQAPGRAHRCAHCRRHFPGWVALWLHTRRCQARLPLPCPECGRRFRHAPFLALHRQVHAAATPDLGFACHLCGQSFRGWVALVLHLRAHSAAKRPIACPKCERRFWRRKQLRAHLRRCHPPAPEARPFICGNCGRSFAQWDQLVAHKRVHVAEALEEAAAKALGPRPRGRPAVTAPRPGGDAVDRPFQCACCGKRFRHKPNLIAHRRVHTGERPHQCPECGKRFTNKPYLTSHRRIHTGEKPYPCKECGRRFRHKPNLLSHSKIHKRSEGSAQAAPGPGSPQLPAGPQESAAEPTPAVPLKPAQEPPPGAPPEHPQDPIEAPPSLYSCDDCGRSFRLERFLRAHQRQHTGERPFTCAECGKNFGKKTHLVAHSRVHSGERPFACEECGRRFSQGSHLAAHRRDHAPDRPFVCPDCGKAFRHKPYLAAHRRIHTGEKPYVCPDCGKAFSQKSNLVSHRRIHTGERPYACPDCDRSFSQKSNLITHRKSHIRDGAFCCAICGQTFDDEERLLAHQKKHDV</sequence>
<reference key="1">
    <citation type="journal article" date="2000" name="Nucleic Acids Res.">
        <title>The dhfr oribeta-binding protein RIP60 contains 15 zinc fingers: DNA binding and looping by the central three fingers and an associated proline-rich region.</title>
        <authorList>
            <person name="Houchens C.R."/>
            <person name="Montigny W."/>
            <person name="Zeltser L."/>
            <person name="Dailey L."/>
            <person name="Gilbert J.M."/>
            <person name="Heintz N.H."/>
        </authorList>
    </citation>
    <scope>NUCLEOTIDE SEQUENCE [MRNA]</scope>
    <scope>PROTEIN SEQUENCE OF 200-210 AND 501-518</scope>
    <scope>FUNCTION</scope>
    <source>
        <tissue>Cervix carcinoma</tissue>
    </source>
</reference>
<reference key="2">
    <citation type="submission" date="1999-08" db="EMBL/GenBank/DDBJ databases">
        <title>Cloning of a novel zinc finger protein.</title>
        <authorList>
            <person name="Dobner T.G."/>
            <person name="Fischer M."/>
            <person name="Groitl P."/>
        </authorList>
    </citation>
    <scope>NUCLEOTIDE SEQUENCE [MRNA]</scope>
    <scope>VARIANT PRO-14</scope>
    <source>
        <tissue>Cervix carcinoma</tissue>
    </source>
</reference>
<reference key="3">
    <citation type="journal article" date="2003" name="Nature">
        <title>The DNA sequence of human chromosome 7.</title>
        <authorList>
            <person name="Hillier L.W."/>
            <person name="Fulton R.S."/>
            <person name="Fulton L.A."/>
            <person name="Graves T.A."/>
            <person name="Pepin K.H."/>
            <person name="Wagner-McPherson C."/>
            <person name="Layman D."/>
            <person name="Maas J."/>
            <person name="Jaeger S."/>
            <person name="Walker R."/>
            <person name="Wylie K."/>
            <person name="Sekhon M."/>
            <person name="Becker M.C."/>
            <person name="O'Laughlin M.D."/>
            <person name="Schaller M.E."/>
            <person name="Fewell G.A."/>
            <person name="Delehaunty K.D."/>
            <person name="Miner T.L."/>
            <person name="Nash W.E."/>
            <person name="Cordes M."/>
            <person name="Du H."/>
            <person name="Sun H."/>
            <person name="Edwards J."/>
            <person name="Bradshaw-Cordum H."/>
            <person name="Ali J."/>
            <person name="Andrews S."/>
            <person name="Isak A."/>
            <person name="Vanbrunt A."/>
            <person name="Nguyen C."/>
            <person name="Du F."/>
            <person name="Lamar B."/>
            <person name="Courtney L."/>
            <person name="Kalicki J."/>
            <person name="Ozersky P."/>
            <person name="Bielicki L."/>
            <person name="Scott K."/>
            <person name="Holmes A."/>
            <person name="Harkins R."/>
            <person name="Harris A."/>
            <person name="Strong C.M."/>
            <person name="Hou S."/>
            <person name="Tomlinson C."/>
            <person name="Dauphin-Kohlberg S."/>
            <person name="Kozlowicz-Reilly A."/>
            <person name="Leonard S."/>
            <person name="Rohlfing T."/>
            <person name="Rock S.M."/>
            <person name="Tin-Wollam A.-M."/>
            <person name="Abbott A."/>
            <person name="Minx P."/>
            <person name="Maupin R."/>
            <person name="Strowmatt C."/>
            <person name="Latreille P."/>
            <person name="Miller N."/>
            <person name="Johnson D."/>
            <person name="Murray J."/>
            <person name="Woessner J.P."/>
            <person name="Wendl M.C."/>
            <person name="Yang S.-P."/>
            <person name="Schultz B.R."/>
            <person name="Wallis J.W."/>
            <person name="Spieth J."/>
            <person name="Bieri T.A."/>
            <person name="Nelson J.O."/>
            <person name="Berkowicz N."/>
            <person name="Wohldmann P.E."/>
            <person name="Cook L.L."/>
            <person name="Hickenbotham M.T."/>
            <person name="Eldred J."/>
            <person name="Williams D."/>
            <person name="Bedell J.A."/>
            <person name="Mardis E.R."/>
            <person name="Clifton S.W."/>
            <person name="Chissoe S.L."/>
            <person name="Marra M.A."/>
            <person name="Raymond C."/>
            <person name="Haugen E."/>
            <person name="Gillett W."/>
            <person name="Zhou Y."/>
            <person name="James R."/>
            <person name="Phelps K."/>
            <person name="Iadanoto S."/>
            <person name="Bubb K."/>
            <person name="Simms E."/>
            <person name="Levy R."/>
            <person name="Clendenning J."/>
            <person name="Kaul R."/>
            <person name="Kent W.J."/>
            <person name="Furey T.S."/>
            <person name="Baertsch R.A."/>
            <person name="Brent M.R."/>
            <person name="Keibler E."/>
            <person name="Flicek P."/>
            <person name="Bork P."/>
            <person name="Suyama M."/>
            <person name="Bailey J.A."/>
            <person name="Portnoy M.E."/>
            <person name="Torrents D."/>
            <person name="Chinwalla A.T."/>
            <person name="Gish W.R."/>
            <person name="Eddy S.R."/>
            <person name="McPherson J.D."/>
            <person name="Olson M.V."/>
            <person name="Eichler E.E."/>
            <person name="Green E.D."/>
            <person name="Waterston R.H."/>
            <person name="Wilson R.K."/>
        </authorList>
    </citation>
    <scope>NUCLEOTIDE SEQUENCE [LARGE SCALE GENOMIC DNA]</scope>
</reference>
<reference key="4">
    <citation type="submission" date="2005-09" db="EMBL/GenBank/DDBJ databases">
        <authorList>
            <person name="Mural R.J."/>
            <person name="Istrail S."/>
            <person name="Sutton G.G."/>
            <person name="Florea L."/>
            <person name="Halpern A.L."/>
            <person name="Mobarry C.M."/>
            <person name="Lippert R."/>
            <person name="Walenz B."/>
            <person name="Shatkay H."/>
            <person name="Dew I."/>
            <person name="Miller J.R."/>
            <person name="Flanigan M.J."/>
            <person name="Edwards N.J."/>
            <person name="Bolanos R."/>
            <person name="Fasulo D."/>
            <person name="Halldorsson B.V."/>
            <person name="Hannenhalli S."/>
            <person name="Turner R."/>
            <person name="Yooseph S."/>
            <person name="Lu F."/>
            <person name="Nusskern D.R."/>
            <person name="Shue B.C."/>
            <person name="Zheng X.H."/>
            <person name="Zhong F."/>
            <person name="Delcher A.L."/>
            <person name="Huson D.H."/>
            <person name="Kravitz S.A."/>
            <person name="Mouchard L."/>
            <person name="Reinert K."/>
            <person name="Remington K.A."/>
            <person name="Clark A.G."/>
            <person name="Waterman M.S."/>
            <person name="Eichler E.E."/>
            <person name="Adams M.D."/>
            <person name="Hunkapiller M.W."/>
            <person name="Myers E.W."/>
            <person name="Venter J.C."/>
        </authorList>
    </citation>
    <scope>NUCLEOTIDE SEQUENCE [LARGE SCALE GENOMIC DNA]</scope>
</reference>
<reference key="5">
    <citation type="journal article" date="2004" name="Genome Res.">
        <title>The status, quality, and expansion of the NIH full-length cDNA project: the Mammalian Gene Collection (MGC).</title>
        <authorList>
            <consortium name="The MGC Project Team"/>
        </authorList>
    </citation>
    <scope>NUCLEOTIDE SEQUENCE [LARGE SCALE MRNA]</scope>
    <scope>VARIANT SER-88</scope>
    <source>
        <tissue>Eye</tissue>
        <tissue>Muscle</tissue>
    </source>
</reference>
<reference key="6">
    <citation type="journal article" date="1990" name="Mol. Cell. Biol.">
        <title>Purification of RIP60 and RIP100, mammalian proteins with origin-specific DNA-binding and ATP-dependent DNA helicase activities.</title>
        <authorList>
            <person name="Dailey L."/>
            <person name="Caddle M.S."/>
            <person name="Heintz N."/>
            <person name="Heintz N.H."/>
        </authorList>
    </citation>
    <scope>FUNCTION</scope>
    <scope>IDENTIFICATION IN A COMPLEX WITH RIP100</scope>
</reference>
<reference key="7">
    <citation type="journal article" date="1990" name="Mol. Cell. Biol.">
        <title>RIP60, a mammalian origin-binding protein, enhances DNA bending near the dihydrofolate reductase origin of replication.</title>
        <authorList>
            <person name="Caddle M.S."/>
            <person name="Dailey L."/>
            <person name="Heintz N.H."/>
        </authorList>
    </citation>
    <scope>DNA-BINDING</scope>
</reference>
<reference key="8">
    <citation type="journal article" date="1993" name="J. Mol. Biol.">
        <title>RIP60 dimers and multiples of dimers assemble link structures at an origin of bidirectional replication in the dihydrofolate reductase amplicon of Chinese hamster ovary cells.</title>
        <authorList>
            <person name="Mastrangelo I.A."/>
            <person name="Held P.G."/>
            <person name="Dailey L."/>
            <person name="Wall J.S."/>
            <person name="Hough P.V."/>
            <person name="Heintz N."/>
            <person name="Heintz N.H."/>
        </authorList>
    </citation>
    <scope>FUNCTION</scope>
    <scope>SUBUNIT</scope>
    <scope>IDENTIFICATION BY ELECTRON MICROSCOPY</scope>
</reference>
<reference key="9">
    <citation type="journal article" date="2001" name="Nucleic Acids Res.">
        <title>Condensation by DNA looping facilitates transfer of large DNA molecules into mammalian cells.</title>
        <authorList>
            <person name="Montigny W.J."/>
            <person name="Houchens C.R."/>
            <person name="Illenye S."/>
            <person name="Gilbert J."/>
            <person name="Coonrod E."/>
            <person name="Chang Y.-C."/>
            <person name="Heintz N.H."/>
        </authorList>
    </citation>
    <scope>FUNCTION</scope>
</reference>
<reference key="10">
    <citation type="journal article" date="2006" name="Nat. Biotechnol.">
        <title>A probability-based approach for high-throughput protein phosphorylation analysis and site localization.</title>
        <authorList>
            <person name="Beausoleil S.A."/>
            <person name="Villen J."/>
            <person name="Gerber S.A."/>
            <person name="Rush J."/>
            <person name="Gygi S.P."/>
        </authorList>
    </citation>
    <scope>IDENTIFICATION BY MASS SPECTROMETRY [LARGE SCALE ANALYSIS]</scope>
    <source>
        <tissue>Cervix carcinoma</tissue>
    </source>
</reference>
<reference key="11">
    <citation type="journal article" date="2008" name="Proc. Natl. Acad. Sci. U.S.A.">
        <title>A quantitative atlas of mitotic phosphorylation.</title>
        <authorList>
            <person name="Dephoure N."/>
            <person name="Zhou C."/>
            <person name="Villen J."/>
            <person name="Beausoleil S.A."/>
            <person name="Bakalarski C.E."/>
            <person name="Elledge S.J."/>
            <person name="Gygi S.P."/>
        </authorList>
    </citation>
    <scope>IDENTIFICATION BY MASS SPECTROMETRY [LARGE SCALE ANALYSIS]</scope>
    <source>
        <tissue>Cervix carcinoma</tissue>
    </source>
</reference>
<reference key="12">
    <citation type="journal article" date="2009" name="Science">
        <title>Lysine acetylation targets protein complexes and co-regulates major cellular functions.</title>
        <authorList>
            <person name="Choudhary C."/>
            <person name="Kumar C."/>
            <person name="Gnad F."/>
            <person name="Nielsen M.L."/>
            <person name="Rehman M."/>
            <person name="Walther T.C."/>
            <person name="Olsen J.V."/>
            <person name="Mann M."/>
        </authorList>
    </citation>
    <scope>ACETYLATION [LARGE SCALE ANALYSIS] AT LYS-33 AND LYS-276</scope>
    <scope>IDENTIFICATION BY MASS SPECTROMETRY [LARGE SCALE ANALYSIS]</scope>
</reference>
<reference key="13">
    <citation type="journal article" date="2010" name="Biochem. Biophys. Res. Commun.">
        <title>Repin1 maybe involved in the regulation of cell size and glucose transport in adipocytes.</title>
        <authorList>
            <person name="Ruschke K."/>
            <person name="Illes M."/>
            <person name="Kern M."/>
            <person name="Kloeting I."/>
            <person name="Fasshauer M."/>
            <person name="Schoen M.R."/>
            <person name="Kosacka J."/>
            <person name="Fitzl G."/>
            <person name="Kovacs P."/>
            <person name="Stumvoll M."/>
            <person name="Blueher M."/>
            <person name="Kloeting N."/>
        </authorList>
    </citation>
    <scope>TISSUE SPECIFICITY</scope>
</reference>
<reference key="14">
    <citation type="journal article" date="2010" name="Sci. Signal.">
        <title>Quantitative phosphoproteomics reveals widespread full phosphorylation site occupancy during mitosis.</title>
        <authorList>
            <person name="Olsen J.V."/>
            <person name="Vermeulen M."/>
            <person name="Santamaria A."/>
            <person name="Kumar C."/>
            <person name="Miller M.L."/>
            <person name="Jensen L.J."/>
            <person name="Gnad F."/>
            <person name="Cox J."/>
            <person name="Jensen T.S."/>
            <person name="Nigg E.A."/>
            <person name="Brunak S."/>
            <person name="Mann M."/>
        </authorList>
    </citation>
    <scope>PHOSPHORYLATION [LARGE SCALE ANALYSIS] AT SER-27</scope>
    <scope>IDENTIFICATION BY MASS SPECTROMETRY [LARGE SCALE ANALYSIS]</scope>
    <source>
        <tissue>Cervix carcinoma</tissue>
    </source>
</reference>
<reference key="15">
    <citation type="journal article" date="2011" name="BMC Syst. Biol.">
        <title>Initial characterization of the human central proteome.</title>
        <authorList>
            <person name="Burkard T.R."/>
            <person name="Planyavsky M."/>
            <person name="Kaupe I."/>
            <person name="Breitwieser F.P."/>
            <person name="Buerckstuemmer T."/>
            <person name="Bennett K.L."/>
            <person name="Superti-Furga G."/>
            <person name="Colinge J."/>
        </authorList>
    </citation>
    <scope>IDENTIFICATION BY MASS SPECTROMETRY [LARGE SCALE ANALYSIS]</scope>
</reference>
<reference key="16">
    <citation type="journal article" date="2013" name="J. Proteome Res.">
        <title>Toward a comprehensive characterization of a human cancer cell phosphoproteome.</title>
        <authorList>
            <person name="Zhou H."/>
            <person name="Di Palma S."/>
            <person name="Preisinger C."/>
            <person name="Peng M."/>
            <person name="Polat A.N."/>
            <person name="Heck A.J."/>
            <person name="Mohammed S."/>
        </authorList>
    </citation>
    <scope>PHOSPHORYLATION [LARGE SCALE ANALYSIS] AT SER-27 AND THR-30</scope>
    <scope>IDENTIFICATION BY MASS SPECTROMETRY [LARGE SCALE ANALYSIS]</scope>
    <source>
        <tissue>Cervix carcinoma</tissue>
        <tissue>Erythroleukemia</tissue>
    </source>
</reference>
<reference key="17">
    <citation type="journal article" date="2023" name="Cell Death Dis.">
        <title>REPIN1 regulates iron metabolism and osteoblast apoptosis in osteoporosis.</title>
        <authorList>
            <person name="Xia Y."/>
            <person name="Ge G."/>
            <person name="Xiao H."/>
            <person name="Wu M."/>
            <person name="Wang T."/>
            <person name="Gu C."/>
            <person name="Yang H."/>
            <person name="Geng D."/>
        </authorList>
    </citation>
    <scope>TISSUE SPECIFICITY</scope>
    <scope>INDUCTION</scope>
</reference>
<reference key="18">
    <citation type="journal article" date="2019" name="Int. J. Obes. Relat. Metab. Disord.">
        <title>Metabolic effects of genetic variation in the human REPIN1 gene.</title>
        <authorList>
            <person name="Krueger J."/>
            <person name="Berger C."/>
            <person name="Weidle K."/>
            <person name="Schleinitz D."/>
            <person name="Toenjes A."/>
            <person name="Stumvoll M."/>
            <person name="Blueher M."/>
            <person name="Kovacs P."/>
            <person name="Kloeting N."/>
        </authorList>
    </citation>
    <scope>CHARACTERIZATION OF VARIANT 356-PRO--ALA-359 DEL</scope>
</reference>
<dbReference type="EMBL" id="AF201303">
    <property type="protein sequence ID" value="AAF26712.1"/>
    <property type="molecule type" value="mRNA"/>
</dbReference>
<dbReference type="EMBL" id="AJ245553">
    <property type="protein sequence ID" value="CAB53100.1"/>
    <property type="status" value="ALT_FRAME"/>
    <property type="molecule type" value="mRNA"/>
</dbReference>
<dbReference type="EMBL" id="AC005586">
    <property type="protein sequence ID" value="AAS00385.1"/>
    <property type="molecule type" value="Genomic_DNA"/>
</dbReference>
<dbReference type="EMBL" id="AC005586">
    <property type="protein sequence ID" value="AAS00386.1"/>
    <property type="status" value="ALT_SEQ"/>
    <property type="molecule type" value="Genomic_DNA"/>
</dbReference>
<dbReference type="EMBL" id="CH471173">
    <property type="protein sequence ID" value="EAW54117.1"/>
    <property type="molecule type" value="Genomic_DNA"/>
</dbReference>
<dbReference type="EMBL" id="CH471173">
    <property type="protein sequence ID" value="EAW54118.1"/>
    <property type="molecule type" value="Genomic_DNA"/>
</dbReference>
<dbReference type="EMBL" id="CH471173">
    <property type="protein sequence ID" value="EAW54119.1"/>
    <property type="molecule type" value="Genomic_DNA"/>
</dbReference>
<dbReference type="EMBL" id="BC000363">
    <property type="protein sequence ID" value="AAH00363.2"/>
    <property type="status" value="ALT_INIT"/>
    <property type="molecule type" value="mRNA"/>
</dbReference>
<dbReference type="EMBL" id="BC001760">
    <property type="protein sequence ID" value="AAH01760.1"/>
    <property type="molecule type" value="mRNA"/>
</dbReference>
<dbReference type="CCDS" id="CCDS43677.1">
    <molecule id="Q9BWE0-3"/>
</dbReference>
<dbReference type="CCDS" id="CCDS47745.1">
    <molecule id="Q9BWE0-4"/>
</dbReference>
<dbReference type="RefSeq" id="NP_001093165.1">
    <molecule id="Q9BWE0-4"/>
    <property type="nucleotide sequence ID" value="NM_001099695.2"/>
</dbReference>
<dbReference type="RefSeq" id="NP_001093166.1">
    <molecule id="Q9BWE0-3"/>
    <property type="nucleotide sequence ID" value="NM_001099696.3"/>
</dbReference>
<dbReference type="RefSeq" id="NP_001349674.1">
    <molecule id="Q9BWE0-4"/>
    <property type="nucleotide sequence ID" value="NM_001362745.2"/>
</dbReference>
<dbReference type="RefSeq" id="NP_001349675.1">
    <molecule id="Q9BWE0-3"/>
    <property type="nucleotide sequence ID" value="NM_001362746.2"/>
</dbReference>
<dbReference type="RefSeq" id="NP_001349676.1">
    <molecule id="Q9BWE0-3"/>
    <property type="nucleotide sequence ID" value="NM_001362747.2"/>
</dbReference>
<dbReference type="RefSeq" id="NP_001374967.1">
    <molecule id="Q9BWE0-4"/>
    <property type="nucleotide sequence ID" value="NM_001388038.1"/>
</dbReference>
<dbReference type="RefSeq" id="NP_001374968.1">
    <molecule id="Q9BWE0-4"/>
    <property type="nucleotide sequence ID" value="NM_001388039.1"/>
</dbReference>
<dbReference type="RefSeq" id="NP_001374969.1">
    <molecule id="Q9BWE0-4"/>
    <property type="nucleotide sequence ID" value="NM_001388040.1"/>
</dbReference>
<dbReference type="RefSeq" id="NP_001374975.1">
    <molecule id="Q9BWE0-3"/>
    <property type="nucleotide sequence ID" value="NM_001388046.1"/>
</dbReference>
<dbReference type="RefSeq" id="NP_001374976.1">
    <molecule id="Q9BWE0-3"/>
    <property type="nucleotide sequence ID" value="NM_001388047.1"/>
</dbReference>
<dbReference type="RefSeq" id="NP_001374977.1">
    <molecule id="Q9BWE0-3"/>
    <property type="nucleotide sequence ID" value="NM_001388048.1"/>
</dbReference>
<dbReference type="RefSeq" id="NP_001374978.1">
    <molecule id="Q9BWE0-3"/>
    <property type="nucleotide sequence ID" value="NM_001388049.1"/>
</dbReference>
<dbReference type="RefSeq" id="NP_001374979.1">
    <molecule id="Q9BWE0-3"/>
    <property type="nucleotide sequence ID" value="NM_001388050.1"/>
</dbReference>
<dbReference type="RefSeq" id="NP_001374980.1">
    <molecule id="Q9BWE0-3"/>
    <property type="nucleotide sequence ID" value="NM_001388051.1"/>
</dbReference>
<dbReference type="RefSeq" id="NP_001374981.1">
    <molecule id="Q9BWE0-3"/>
    <property type="nucleotide sequence ID" value="NM_001388052.1"/>
</dbReference>
<dbReference type="RefSeq" id="NP_001374982.1">
    <molecule id="Q9BWE0-3"/>
    <property type="nucleotide sequence ID" value="NM_001388053.1"/>
</dbReference>
<dbReference type="RefSeq" id="NP_001374983.1">
    <molecule id="Q9BWE0-3"/>
    <property type="nucleotide sequence ID" value="NM_001388054.1"/>
</dbReference>
<dbReference type="RefSeq" id="NP_001374984.1">
    <molecule id="Q9BWE0-3"/>
    <property type="nucleotide sequence ID" value="NM_001388055.1"/>
</dbReference>
<dbReference type="RefSeq" id="NP_001374985.1">
    <molecule id="Q9BWE0-3"/>
    <property type="nucleotide sequence ID" value="NM_001388056.1"/>
</dbReference>
<dbReference type="RefSeq" id="NP_001374986.1">
    <molecule id="Q9BWE0-3"/>
    <property type="nucleotide sequence ID" value="NM_001388057.1"/>
</dbReference>
<dbReference type="RefSeq" id="NP_001374987.1">
    <molecule id="Q9BWE0-3"/>
    <property type="nucleotide sequence ID" value="NM_001388058.1"/>
</dbReference>
<dbReference type="RefSeq" id="NP_001374988.1">
    <molecule id="Q9BWE0-3"/>
    <property type="nucleotide sequence ID" value="NM_001388059.1"/>
</dbReference>
<dbReference type="RefSeq" id="NP_001374989.1">
    <molecule id="Q9BWE0-3"/>
    <property type="nucleotide sequence ID" value="NM_001388060.1"/>
</dbReference>
<dbReference type="RefSeq" id="NP_001374990.1">
    <molecule id="Q9BWE0-3"/>
    <property type="nucleotide sequence ID" value="NM_001388061.1"/>
</dbReference>
<dbReference type="RefSeq" id="NP_001374991.1">
    <molecule id="Q9BWE0-3"/>
    <property type="nucleotide sequence ID" value="NM_001388062.1"/>
</dbReference>
<dbReference type="RefSeq" id="NP_001374992.1">
    <molecule id="Q9BWE0-3"/>
    <property type="nucleotide sequence ID" value="NM_001388063.1"/>
</dbReference>
<dbReference type="RefSeq" id="NP_001374993.1">
    <molecule id="Q9BWE0-3"/>
    <property type="nucleotide sequence ID" value="NM_001388064.1"/>
</dbReference>
<dbReference type="RefSeq" id="NP_001374994.1">
    <molecule id="Q9BWE0-3"/>
    <property type="nucleotide sequence ID" value="NM_001388065.1"/>
</dbReference>
<dbReference type="RefSeq" id="NP_037532.2">
    <molecule id="Q9BWE0-3"/>
    <property type="nucleotide sequence ID" value="NM_013400.4"/>
</dbReference>
<dbReference type="RefSeq" id="NP_055189.2">
    <property type="nucleotide sequence ID" value="NM_014374.3"/>
</dbReference>
<dbReference type="RefSeq" id="XP_005250042.1">
    <property type="nucleotide sequence ID" value="XM_005249985.1"/>
</dbReference>
<dbReference type="RefSeq" id="XP_006716010.1">
    <property type="nucleotide sequence ID" value="XM_006715947.3"/>
</dbReference>
<dbReference type="RefSeq" id="XP_006716011.1">
    <property type="nucleotide sequence ID" value="XM_006715948.3"/>
</dbReference>
<dbReference type="RefSeq" id="XP_006716012.1">
    <property type="nucleotide sequence ID" value="XM_006715949.3"/>
</dbReference>
<dbReference type="RefSeq" id="XP_006716015.1">
    <property type="nucleotide sequence ID" value="XM_006715952.2"/>
</dbReference>
<dbReference type="RefSeq" id="XP_006716016.1">
    <property type="nucleotide sequence ID" value="XM_006715953.2"/>
</dbReference>
<dbReference type="RefSeq" id="XP_011514414.1">
    <property type="nucleotide sequence ID" value="XM_011516112.1"/>
</dbReference>
<dbReference type="RefSeq" id="XP_016867570.1">
    <property type="nucleotide sequence ID" value="XM_017012081.1"/>
</dbReference>
<dbReference type="RefSeq" id="XP_016867571.1">
    <property type="nucleotide sequence ID" value="XM_017012082.1"/>
</dbReference>
<dbReference type="RefSeq" id="XP_024302505.1">
    <molecule id="Q9BWE0-3"/>
    <property type="nucleotide sequence ID" value="XM_024446737.2"/>
</dbReference>
<dbReference type="RefSeq" id="XP_024302506.1">
    <molecule id="Q9BWE0-3"/>
    <property type="nucleotide sequence ID" value="XM_024446738.2"/>
</dbReference>
<dbReference type="RefSeq" id="XP_047276234.1">
    <molecule id="Q9BWE0-3"/>
    <property type="nucleotide sequence ID" value="XM_047420278.1"/>
</dbReference>
<dbReference type="RefSeq" id="XP_047276235.1">
    <molecule id="Q9BWE0-3"/>
    <property type="nucleotide sequence ID" value="XM_047420279.1"/>
</dbReference>
<dbReference type="SMR" id="Q9BWE0"/>
<dbReference type="BioGRID" id="118927">
    <property type="interactions" value="116"/>
</dbReference>
<dbReference type="FunCoup" id="Q9BWE0">
    <property type="interactions" value="175"/>
</dbReference>
<dbReference type="IntAct" id="Q9BWE0">
    <property type="interactions" value="54"/>
</dbReference>
<dbReference type="MINT" id="Q9BWE0"/>
<dbReference type="STRING" id="9606.ENSP00000417291"/>
<dbReference type="GlyGen" id="Q9BWE0">
    <property type="glycosylation" value="2 sites, 1 O-linked glycan (1 site)"/>
</dbReference>
<dbReference type="iPTMnet" id="Q9BWE0"/>
<dbReference type="PhosphoSitePlus" id="Q9BWE0"/>
<dbReference type="BioMuta" id="REPIN1"/>
<dbReference type="DMDM" id="74761300"/>
<dbReference type="jPOST" id="Q9BWE0"/>
<dbReference type="MassIVE" id="Q9BWE0"/>
<dbReference type="PaxDb" id="9606-ENSP00000417291"/>
<dbReference type="PeptideAtlas" id="Q9BWE0"/>
<dbReference type="ProteomicsDB" id="79270">
    <molecule id="Q9BWE0-3"/>
</dbReference>
<dbReference type="ProteomicsDB" id="8361"/>
<dbReference type="Pumba" id="Q9BWE0"/>
<dbReference type="Antibodypedia" id="32865">
    <property type="antibodies" value="67 antibodies from 18 providers"/>
</dbReference>
<dbReference type="DNASU" id="29803"/>
<dbReference type="Ensembl" id="ENST00000397281.6">
    <molecule id="Q9BWE0-3"/>
    <property type="protein sequence ID" value="ENSP00000380451.2"/>
    <property type="gene ID" value="ENSG00000214022.12"/>
</dbReference>
<dbReference type="Ensembl" id="ENST00000425389.2">
    <molecule id="Q9BWE0-3"/>
    <property type="protein sequence ID" value="ENSP00000388287.2"/>
    <property type="gene ID" value="ENSG00000214022.12"/>
</dbReference>
<dbReference type="Ensembl" id="ENST00000444957.3">
    <molecule id="Q9BWE0-3"/>
    <property type="protein sequence ID" value="ENSP00000407714.1"/>
    <property type="gene ID" value="ENSG00000214022.12"/>
</dbReference>
<dbReference type="Ensembl" id="ENST00000489432.7">
    <molecule id="Q9BWE0-4"/>
    <property type="protein sequence ID" value="ENSP00000417291.2"/>
    <property type="gene ID" value="ENSG00000214022.12"/>
</dbReference>
<dbReference type="GeneID" id="29803"/>
<dbReference type="KEGG" id="hsa:29803"/>
<dbReference type="MANE-Select" id="ENST00000489432.7">
    <molecule id="Q9BWE0-4"/>
    <property type="protein sequence ID" value="ENSP00000417291.2"/>
    <property type="RefSeq nucleotide sequence ID" value="NM_001099695.2"/>
    <property type="RefSeq protein sequence ID" value="NP_001093165.1"/>
</dbReference>
<dbReference type="UCSC" id="uc003whc.2">
    <molecule id="Q9BWE0-3"/>
    <property type="organism name" value="human"/>
</dbReference>
<dbReference type="AGR" id="HGNC:17922"/>
<dbReference type="CTD" id="29803"/>
<dbReference type="DisGeNET" id="29803"/>
<dbReference type="GeneCards" id="REPIN1"/>
<dbReference type="HGNC" id="HGNC:17922">
    <property type="gene designation" value="REPIN1"/>
</dbReference>
<dbReference type="HPA" id="ENSG00000214022">
    <property type="expression patterns" value="Low tissue specificity"/>
</dbReference>
<dbReference type="MIM" id="619039">
    <property type="type" value="gene"/>
</dbReference>
<dbReference type="neXtProt" id="NX_Q9BWE0"/>
<dbReference type="OpenTargets" id="ENSG00000214022"/>
<dbReference type="PharmGKB" id="PA134933473"/>
<dbReference type="VEuPathDB" id="HostDB:ENSG00000214022"/>
<dbReference type="eggNOG" id="KOG1721">
    <property type="taxonomic scope" value="Eukaryota"/>
</dbReference>
<dbReference type="GeneTree" id="ENSGT00940000162588"/>
<dbReference type="HOGENOM" id="CLU_002678_36_0_1"/>
<dbReference type="InParanoid" id="Q9BWE0"/>
<dbReference type="OrthoDB" id="654211at2759"/>
<dbReference type="PAN-GO" id="Q9BWE0">
    <property type="GO annotations" value="3 GO annotations based on evolutionary models"/>
</dbReference>
<dbReference type="PhylomeDB" id="Q9BWE0"/>
<dbReference type="TreeFam" id="TF326846"/>
<dbReference type="PathwayCommons" id="Q9BWE0"/>
<dbReference type="SignaLink" id="Q9BWE0"/>
<dbReference type="BioGRID-ORCS" id="29803">
    <property type="hits" value="9 hits in 1176 CRISPR screens"/>
</dbReference>
<dbReference type="ChiTaRS" id="REPIN1">
    <property type="organism name" value="human"/>
</dbReference>
<dbReference type="GeneWiki" id="REPIN1"/>
<dbReference type="GenomeRNAi" id="29803"/>
<dbReference type="Pharos" id="Q9BWE0">
    <property type="development level" value="Tbio"/>
</dbReference>
<dbReference type="PRO" id="PR:Q9BWE0"/>
<dbReference type="Proteomes" id="UP000005640">
    <property type="component" value="Chromosome 7"/>
</dbReference>
<dbReference type="RNAct" id="Q9BWE0">
    <property type="molecule type" value="protein"/>
</dbReference>
<dbReference type="Bgee" id="ENSG00000214022">
    <property type="expression patterns" value="Expressed in right uterine tube and 201 other cell types or tissues"/>
</dbReference>
<dbReference type="ExpressionAtlas" id="Q9BWE0">
    <property type="expression patterns" value="baseline and differential"/>
</dbReference>
<dbReference type="GO" id="GO:0005694">
    <property type="term" value="C:chromosome"/>
    <property type="evidence" value="ECO:0000318"/>
    <property type="project" value="GO_Central"/>
</dbReference>
<dbReference type="GO" id="GO:0005829">
    <property type="term" value="C:cytosol"/>
    <property type="evidence" value="ECO:0000250"/>
    <property type="project" value="UniProtKB"/>
</dbReference>
<dbReference type="GO" id="GO:0031965">
    <property type="term" value="C:nuclear membrane"/>
    <property type="evidence" value="ECO:0000250"/>
    <property type="project" value="UniProtKB"/>
</dbReference>
<dbReference type="GO" id="GO:0005654">
    <property type="term" value="C:nucleoplasm"/>
    <property type="evidence" value="ECO:0000314"/>
    <property type="project" value="HPA"/>
</dbReference>
<dbReference type="GO" id="GO:0043035">
    <property type="term" value="F:chromatin insulator sequence binding"/>
    <property type="evidence" value="ECO:0000318"/>
    <property type="project" value="GO_Central"/>
</dbReference>
<dbReference type="GO" id="GO:0003723">
    <property type="term" value="F:RNA binding"/>
    <property type="evidence" value="ECO:0007005"/>
    <property type="project" value="UniProtKB"/>
</dbReference>
<dbReference type="GO" id="GO:0043565">
    <property type="term" value="F:sequence-specific DNA binding"/>
    <property type="evidence" value="ECO:0000314"/>
    <property type="project" value="UniProtKB"/>
</dbReference>
<dbReference type="GO" id="GO:0008270">
    <property type="term" value="F:zinc ion binding"/>
    <property type="evidence" value="ECO:0007669"/>
    <property type="project" value="UniProtKB-KW"/>
</dbReference>
<dbReference type="GO" id="GO:2000191">
    <property type="term" value="P:regulation of fatty acid transport"/>
    <property type="evidence" value="ECO:0000250"/>
    <property type="project" value="UniProtKB"/>
</dbReference>
<dbReference type="GO" id="GO:0006357">
    <property type="term" value="P:regulation of transcription by RNA polymerase II"/>
    <property type="evidence" value="ECO:0000250"/>
    <property type="project" value="UniProtKB"/>
</dbReference>
<dbReference type="FunFam" id="3.30.160.60:FF:001919">
    <property type="entry name" value="Replication initiator 1"/>
    <property type="match status" value="1"/>
</dbReference>
<dbReference type="FunFam" id="3.30.160.60:FF:001973">
    <property type="entry name" value="replication initiator 1"/>
    <property type="match status" value="1"/>
</dbReference>
<dbReference type="FunFam" id="3.30.160.60:FF:000214">
    <property type="entry name" value="replication initiator 1 isoform X1"/>
    <property type="match status" value="4"/>
</dbReference>
<dbReference type="FunFam" id="3.30.160.60:FF:000823">
    <property type="entry name" value="replication initiator 1 isoform X1"/>
    <property type="match status" value="1"/>
</dbReference>
<dbReference type="FunFam" id="3.30.160.60:FF:001048">
    <property type="entry name" value="replication initiator 1 isoform X1"/>
    <property type="match status" value="1"/>
</dbReference>
<dbReference type="FunFam" id="3.30.160.60:FF:001367">
    <property type="entry name" value="replication initiator 1 isoform X1"/>
    <property type="match status" value="1"/>
</dbReference>
<dbReference type="FunFam" id="3.30.160.60:FF:001422">
    <property type="entry name" value="replication initiator 1 isoform X1"/>
    <property type="match status" value="1"/>
</dbReference>
<dbReference type="FunFam" id="3.30.160.60:FF:000750">
    <property type="entry name" value="replication initiator 1 isoform X2"/>
    <property type="match status" value="1"/>
</dbReference>
<dbReference type="FunFam" id="3.30.160.60:FF:000269">
    <property type="entry name" value="Zinc finger protein 287"/>
    <property type="match status" value="1"/>
</dbReference>
<dbReference type="Gene3D" id="3.30.160.60">
    <property type="entry name" value="Classic Zinc Finger"/>
    <property type="match status" value="12"/>
</dbReference>
<dbReference type="InterPro" id="IPR036236">
    <property type="entry name" value="Znf_C2H2_sf"/>
</dbReference>
<dbReference type="InterPro" id="IPR013087">
    <property type="entry name" value="Znf_C2H2_type"/>
</dbReference>
<dbReference type="PANTHER" id="PTHR24376:SF243">
    <property type="entry name" value="C2H2-TYPE DOMAIN-CONTAINING PROTEIN"/>
    <property type="match status" value="1"/>
</dbReference>
<dbReference type="PANTHER" id="PTHR24376">
    <property type="entry name" value="ZINC FINGER PROTEIN"/>
    <property type="match status" value="1"/>
</dbReference>
<dbReference type="Pfam" id="PF00096">
    <property type="entry name" value="zf-C2H2"/>
    <property type="match status" value="13"/>
</dbReference>
<dbReference type="SMART" id="SM00355">
    <property type="entry name" value="ZnF_C2H2"/>
    <property type="match status" value="15"/>
</dbReference>
<dbReference type="SUPFAM" id="SSF57667">
    <property type="entry name" value="beta-beta-alpha zinc fingers"/>
    <property type="match status" value="9"/>
</dbReference>
<dbReference type="PROSITE" id="PS00028">
    <property type="entry name" value="ZINC_FINGER_C2H2_1"/>
    <property type="match status" value="14"/>
</dbReference>
<dbReference type="PROSITE" id="PS50157">
    <property type="entry name" value="ZINC_FINGER_C2H2_2"/>
    <property type="match status" value="14"/>
</dbReference>